<sequence length="293" mass="31016">MSQRTESYLVGLVGDGVTPSLTPPMHEREGDVQGLRYLYRPIDLLELGLAGDSVGEVLRSARTLGFNGLNITHPCKQLVLQHLDEVSPDARRLGAVNTVVIRDGRFIGHNTDFSGFAAALASGLPGARLDRVVQLGAGGAGSAVAYALLSAGAKTLDLVDMDAERAAARAEELSGFFPDSTVTARTTADLPQLMPLADGLVHCTPVGMAAHPGVPLDLELLESRHWVADIVYRPIDTELVQGARAKGCDVLDGGRMAVGQAADAFRIFTGLDADPERMRSHFLELVAAEEVAA</sequence>
<dbReference type="EC" id="1.1.1.25" evidence="1"/>
<dbReference type="EMBL" id="CP001341">
    <property type="protein sequence ID" value="ACL41809.1"/>
    <property type="molecule type" value="Genomic_DNA"/>
</dbReference>
<dbReference type="RefSeq" id="WP_015939002.1">
    <property type="nucleotide sequence ID" value="NC_011886.1"/>
</dbReference>
<dbReference type="SMR" id="B8H806"/>
<dbReference type="STRING" id="452863.Achl_3856"/>
<dbReference type="KEGG" id="ach:Achl_3856"/>
<dbReference type="eggNOG" id="COG0169">
    <property type="taxonomic scope" value="Bacteria"/>
</dbReference>
<dbReference type="HOGENOM" id="CLU_044063_4_3_11"/>
<dbReference type="OrthoDB" id="9776868at2"/>
<dbReference type="UniPathway" id="UPA00053">
    <property type="reaction ID" value="UER00087"/>
</dbReference>
<dbReference type="Proteomes" id="UP000002505">
    <property type="component" value="Chromosome"/>
</dbReference>
<dbReference type="GO" id="GO:0005829">
    <property type="term" value="C:cytosol"/>
    <property type="evidence" value="ECO:0007669"/>
    <property type="project" value="TreeGrafter"/>
</dbReference>
<dbReference type="GO" id="GO:0050661">
    <property type="term" value="F:NADP binding"/>
    <property type="evidence" value="ECO:0007669"/>
    <property type="project" value="TreeGrafter"/>
</dbReference>
<dbReference type="GO" id="GO:0004764">
    <property type="term" value="F:shikimate 3-dehydrogenase (NADP+) activity"/>
    <property type="evidence" value="ECO:0007669"/>
    <property type="project" value="UniProtKB-UniRule"/>
</dbReference>
<dbReference type="GO" id="GO:0008652">
    <property type="term" value="P:amino acid biosynthetic process"/>
    <property type="evidence" value="ECO:0007669"/>
    <property type="project" value="UniProtKB-KW"/>
</dbReference>
<dbReference type="GO" id="GO:0009073">
    <property type="term" value="P:aromatic amino acid family biosynthetic process"/>
    <property type="evidence" value="ECO:0007669"/>
    <property type="project" value="UniProtKB-KW"/>
</dbReference>
<dbReference type="GO" id="GO:0009423">
    <property type="term" value="P:chorismate biosynthetic process"/>
    <property type="evidence" value="ECO:0007669"/>
    <property type="project" value="UniProtKB-UniRule"/>
</dbReference>
<dbReference type="GO" id="GO:0019632">
    <property type="term" value="P:shikimate metabolic process"/>
    <property type="evidence" value="ECO:0007669"/>
    <property type="project" value="TreeGrafter"/>
</dbReference>
<dbReference type="CDD" id="cd01065">
    <property type="entry name" value="NAD_bind_Shikimate_DH"/>
    <property type="match status" value="1"/>
</dbReference>
<dbReference type="Gene3D" id="3.40.50.10860">
    <property type="entry name" value="Leucine Dehydrogenase, chain A, domain 1"/>
    <property type="match status" value="1"/>
</dbReference>
<dbReference type="Gene3D" id="3.40.50.720">
    <property type="entry name" value="NAD(P)-binding Rossmann-like Domain"/>
    <property type="match status" value="1"/>
</dbReference>
<dbReference type="HAMAP" id="MF_00222">
    <property type="entry name" value="Shikimate_DH_AroE"/>
    <property type="match status" value="1"/>
</dbReference>
<dbReference type="InterPro" id="IPR046346">
    <property type="entry name" value="Aminoacid_DH-like_N_sf"/>
</dbReference>
<dbReference type="InterPro" id="IPR036291">
    <property type="entry name" value="NAD(P)-bd_dom_sf"/>
</dbReference>
<dbReference type="InterPro" id="IPR041121">
    <property type="entry name" value="SDH_C"/>
</dbReference>
<dbReference type="InterPro" id="IPR013708">
    <property type="entry name" value="Shikimate_DH-bd_N"/>
</dbReference>
<dbReference type="InterPro" id="IPR022893">
    <property type="entry name" value="Shikimate_DH_fam"/>
</dbReference>
<dbReference type="NCBIfam" id="NF009201">
    <property type="entry name" value="PRK12549.1"/>
    <property type="match status" value="1"/>
</dbReference>
<dbReference type="PANTHER" id="PTHR21089:SF1">
    <property type="entry name" value="BIFUNCTIONAL 3-DEHYDROQUINATE DEHYDRATASE_SHIKIMATE DEHYDROGENASE, CHLOROPLASTIC"/>
    <property type="match status" value="1"/>
</dbReference>
<dbReference type="PANTHER" id="PTHR21089">
    <property type="entry name" value="SHIKIMATE DEHYDROGENASE"/>
    <property type="match status" value="1"/>
</dbReference>
<dbReference type="Pfam" id="PF18317">
    <property type="entry name" value="SDH_C"/>
    <property type="match status" value="1"/>
</dbReference>
<dbReference type="Pfam" id="PF08501">
    <property type="entry name" value="Shikimate_dh_N"/>
    <property type="match status" value="1"/>
</dbReference>
<dbReference type="SUPFAM" id="SSF53223">
    <property type="entry name" value="Aminoacid dehydrogenase-like, N-terminal domain"/>
    <property type="match status" value="1"/>
</dbReference>
<dbReference type="SUPFAM" id="SSF51735">
    <property type="entry name" value="NAD(P)-binding Rossmann-fold domains"/>
    <property type="match status" value="1"/>
</dbReference>
<gene>
    <name evidence="1" type="primary">aroE</name>
    <name type="ordered locus">Achl_3856</name>
</gene>
<organism>
    <name type="scientific">Pseudarthrobacter chlorophenolicus (strain ATCC 700700 / DSM 12829 / CIP 107037 / JCM 12360 / KCTC 9906 / NCIMB 13794 / A6)</name>
    <name type="common">Arthrobacter chlorophenolicus</name>
    <dbReference type="NCBI Taxonomy" id="452863"/>
    <lineage>
        <taxon>Bacteria</taxon>
        <taxon>Bacillati</taxon>
        <taxon>Actinomycetota</taxon>
        <taxon>Actinomycetes</taxon>
        <taxon>Micrococcales</taxon>
        <taxon>Micrococcaceae</taxon>
        <taxon>Pseudarthrobacter</taxon>
    </lineage>
</organism>
<protein>
    <recommendedName>
        <fullName evidence="1">Shikimate dehydrogenase (NADP(+))</fullName>
        <shortName evidence="1">SDH</shortName>
        <ecNumber evidence="1">1.1.1.25</ecNumber>
    </recommendedName>
</protein>
<evidence type="ECO:0000255" key="1">
    <source>
        <dbReference type="HAMAP-Rule" id="MF_00222"/>
    </source>
</evidence>
<name>AROE_PSECP</name>
<accession>B8H806</accession>
<feature type="chain" id="PRO_1000124871" description="Shikimate dehydrogenase (NADP(+))">
    <location>
        <begin position="1"/>
        <end position="293"/>
    </location>
</feature>
<feature type="active site" description="Proton acceptor" evidence="1">
    <location>
        <position position="76"/>
    </location>
</feature>
<feature type="binding site" evidence="1">
    <location>
        <begin position="20"/>
        <end position="22"/>
    </location>
    <ligand>
        <name>shikimate</name>
        <dbReference type="ChEBI" id="CHEBI:36208"/>
    </ligand>
</feature>
<feature type="binding site" evidence="1">
    <location>
        <position position="72"/>
    </location>
    <ligand>
        <name>shikimate</name>
        <dbReference type="ChEBI" id="CHEBI:36208"/>
    </ligand>
</feature>
<feature type="binding site" evidence="1">
    <location>
        <position position="97"/>
    </location>
    <ligand>
        <name>shikimate</name>
        <dbReference type="ChEBI" id="CHEBI:36208"/>
    </ligand>
</feature>
<feature type="binding site" evidence="1">
    <location>
        <position position="112"/>
    </location>
    <ligand>
        <name>shikimate</name>
        <dbReference type="ChEBI" id="CHEBI:36208"/>
    </ligand>
</feature>
<feature type="binding site" evidence="1">
    <location>
        <begin position="136"/>
        <end position="140"/>
    </location>
    <ligand>
        <name>NADP(+)</name>
        <dbReference type="ChEBI" id="CHEBI:58349"/>
    </ligand>
</feature>
<feature type="binding site" evidence="1">
    <location>
        <position position="230"/>
    </location>
    <ligand>
        <name>NADP(+)</name>
        <dbReference type="ChEBI" id="CHEBI:58349"/>
    </ligand>
</feature>
<feature type="binding site" evidence="1">
    <location>
        <position position="232"/>
    </location>
    <ligand>
        <name>shikimate</name>
        <dbReference type="ChEBI" id="CHEBI:36208"/>
    </ligand>
</feature>
<feature type="binding site" evidence="1">
    <location>
        <position position="253"/>
    </location>
    <ligand>
        <name>NADP(+)</name>
        <dbReference type="ChEBI" id="CHEBI:58349"/>
    </ligand>
</feature>
<proteinExistence type="inferred from homology"/>
<keyword id="KW-0028">Amino-acid biosynthesis</keyword>
<keyword id="KW-0057">Aromatic amino acid biosynthesis</keyword>
<keyword id="KW-0521">NADP</keyword>
<keyword id="KW-0560">Oxidoreductase</keyword>
<comment type="function">
    <text evidence="1">Involved in the biosynthesis of the chorismate, which leads to the biosynthesis of aromatic amino acids. Catalyzes the reversible NADPH linked reduction of 3-dehydroshikimate (DHSA) to yield shikimate (SA).</text>
</comment>
<comment type="catalytic activity">
    <reaction evidence="1">
        <text>shikimate + NADP(+) = 3-dehydroshikimate + NADPH + H(+)</text>
        <dbReference type="Rhea" id="RHEA:17737"/>
        <dbReference type="ChEBI" id="CHEBI:15378"/>
        <dbReference type="ChEBI" id="CHEBI:16630"/>
        <dbReference type="ChEBI" id="CHEBI:36208"/>
        <dbReference type="ChEBI" id="CHEBI:57783"/>
        <dbReference type="ChEBI" id="CHEBI:58349"/>
        <dbReference type="EC" id="1.1.1.25"/>
    </reaction>
</comment>
<comment type="pathway">
    <text evidence="1">Metabolic intermediate biosynthesis; chorismate biosynthesis; chorismate from D-erythrose 4-phosphate and phosphoenolpyruvate: step 4/7.</text>
</comment>
<comment type="subunit">
    <text evidence="1">Homodimer.</text>
</comment>
<comment type="similarity">
    <text evidence="1">Belongs to the shikimate dehydrogenase family.</text>
</comment>
<reference key="1">
    <citation type="submission" date="2009-01" db="EMBL/GenBank/DDBJ databases">
        <title>Complete sequence of chromosome of Arthrobacter chlorophenolicus A6.</title>
        <authorList>
            <consortium name="US DOE Joint Genome Institute"/>
            <person name="Lucas S."/>
            <person name="Copeland A."/>
            <person name="Lapidus A."/>
            <person name="Glavina del Rio T."/>
            <person name="Tice H."/>
            <person name="Bruce D."/>
            <person name="Goodwin L."/>
            <person name="Pitluck S."/>
            <person name="Goltsman E."/>
            <person name="Clum A."/>
            <person name="Larimer F."/>
            <person name="Land M."/>
            <person name="Hauser L."/>
            <person name="Kyrpides N."/>
            <person name="Mikhailova N."/>
            <person name="Jansson J."/>
            <person name="Richardson P."/>
        </authorList>
    </citation>
    <scope>NUCLEOTIDE SEQUENCE [LARGE SCALE GENOMIC DNA]</scope>
    <source>
        <strain>ATCC 700700 / DSM 12829 / CIP 107037 / JCM 12360 / KCTC 9906 / NCIMB 13794 / A6</strain>
    </source>
</reference>